<sequence>MGRFIFVSFGLLVVAASLSGTGADCLSGWSSYEGHCYKAFELYKTWEDAESFCMEGVKGGHLVSIESSGEADFVAQLISENMKRLDFFVWIGLRVQGDEKQCNSEWSDGSSVSYENWIESESKTCLGLEQQTKFRKWVNLYCGQRIPFVCEA</sequence>
<accession>Q71RR4</accession>
<proteinExistence type="evidence at transcript level"/>
<name>SLA_TRIST</name>
<keyword id="KW-1203">Blood coagulation cascade inhibiting toxin</keyword>
<keyword id="KW-0106">Calcium</keyword>
<keyword id="KW-1015">Disulfide bond</keyword>
<keyword id="KW-1199">Hemostasis impairing toxin</keyword>
<keyword id="KW-0479">Metal-binding</keyword>
<keyword id="KW-0964">Secreted</keyword>
<keyword id="KW-0732">Signal</keyword>
<keyword id="KW-0800">Toxin</keyword>
<comment type="function">
    <text evidence="1">Anticoagulant protein which binds to the gamma-carboxyglutamic acid-domain regions of factors IX (F9) and factor X (F10) in the presence of calcium with a 1 to 1 stoichiometry.</text>
</comment>
<comment type="subunit">
    <text evidence="1">Heterodimer of subunits A and B; disulfide-linked.</text>
</comment>
<comment type="subcellular location">
    <subcellularLocation>
        <location evidence="1">Secreted</location>
    </subcellularLocation>
</comment>
<comment type="tissue specificity">
    <text>Expressed by the venom gland.</text>
</comment>
<comment type="miscellaneous">
    <text evidence="1">Calcium is required for ligand binding.</text>
</comment>
<comment type="similarity">
    <text evidence="3">Belongs to the snaclec family.</text>
</comment>
<dbReference type="EMBL" id="AF354911">
    <property type="protein sequence ID" value="AAQ15153.1"/>
    <property type="molecule type" value="mRNA"/>
</dbReference>
<dbReference type="SMR" id="Q71RR4"/>
<dbReference type="GO" id="GO:0005576">
    <property type="term" value="C:extracellular region"/>
    <property type="evidence" value="ECO:0007669"/>
    <property type="project" value="UniProtKB-SubCell"/>
</dbReference>
<dbReference type="GO" id="GO:0046872">
    <property type="term" value="F:metal ion binding"/>
    <property type="evidence" value="ECO:0007669"/>
    <property type="project" value="UniProtKB-KW"/>
</dbReference>
<dbReference type="GO" id="GO:0090729">
    <property type="term" value="F:toxin activity"/>
    <property type="evidence" value="ECO:0007669"/>
    <property type="project" value="UniProtKB-KW"/>
</dbReference>
<dbReference type="FunFam" id="3.10.100.10:FF:000087">
    <property type="entry name" value="Snaclec rhodocetin subunit delta"/>
    <property type="match status" value="1"/>
</dbReference>
<dbReference type="Gene3D" id="3.10.100.10">
    <property type="entry name" value="Mannose-Binding Protein A, subunit A"/>
    <property type="match status" value="1"/>
</dbReference>
<dbReference type="InterPro" id="IPR001304">
    <property type="entry name" value="C-type_lectin-like"/>
</dbReference>
<dbReference type="InterPro" id="IPR016186">
    <property type="entry name" value="C-type_lectin-like/link_sf"/>
</dbReference>
<dbReference type="InterPro" id="IPR050111">
    <property type="entry name" value="C-type_lectin/snaclec_domain"/>
</dbReference>
<dbReference type="InterPro" id="IPR018378">
    <property type="entry name" value="C-type_lectin_CS"/>
</dbReference>
<dbReference type="InterPro" id="IPR016187">
    <property type="entry name" value="CTDL_fold"/>
</dbReference>
<dbReference type="PANTHER" id="PTHR22803">
    <property type="entry name" value="MANNOSE, PHOSPHOLIPASE, LECTIN RECEPTOR RELATED"/>
    <property type="match status" value="1"/>
</dbReference>
<dbReference type="Pfam" id="PF00059">
    <property type="entry name" value="Lectin_C"/>
    <property type="match status" value="1"/>
</dbReference>
<dbReference type="PRINTS" id="PR01504">
    <property type="entry name" value="PNCREATITSAP"/>
</dbReference>
<dbReference type="SMART" id="SM00034">
    <property type="entry name" value="CLECT"/>
    <property type="match status" value="1"/>
</dbReference>
<dbReference type="SUPFAM" id="SSF56436">
    <property type="entry name" value="C-type lectin-like"/>
    <property type="match status" value="1"/>
</dbReference>
<dbReference type="PROSITE" id="PS00615">
    <property type="entry name" value="C_TYPE_LECTIN_1"/>
    <property type="match status" value="1"/>
</dbReference>
<dbReference type="PROSITE" id="PS50041">
    <property type="entry name" value="C_TYPE_LECTIN_2"/>
    <property type="match status" value="1"/>
</dbReference>
<protein>
    <recommendedName>
        <fullName>Snaclec coagulation factor IX/factor X-binding protein subunit A</fullName>
        <shortName>IX/X-bp subunit A</shortName>
    </recommendedName>
</protein>
<feature type="signal peptide" evidence="1">
    <location>
        <begin position="1"/>
        <end position="23"/>
    </location>
</feature>
<feature type="chain" id="PRO_0000355311" description="Snaclec coagulation factor IX/factor X-binding protein subunit A">
    <location>
        <begin position="24"/>
        <end position="152"/>
    </location>
</feature>
<feature type="domain" description="C-type lectin" evidence="2">
    <location>
        <begin position="32"/>
        <end position="151"/>
    </location>
</feature>
<feature type="binding site" evidence="1">
    <location>
        <position position="64"/>
    </location>
    <ligand>
        <name>Ca(2+)</name>
        <dbReference type="ChEBI" id="CHEBI:29108"/>
    </ligand>
</feature>
<feature type="binding site" evidence="1">
    <location>
        <position position="66"/>
    </location>
    <ligand>
        <name>Ca(2+)</name>
        <dbReference type="ChEBI" id="CHEBI:29108"/>
    </ligand>
</feature>
<feature type="binding site" evidence="1">
    <location>
        <position position="70"/>
    </location>
    <ligand>
        <name>Ca(2+)</name>
        <dbReference type="ChEBI" id="CHEBI:29108"/>
    </ligand>
</feature>
<feature type="binding site" evidence="1">
    <location>
        <position position="151"/>
    </location>
    <ligand>
        <name>Ca(2+)</name>
        <dbReference type="ChEBI" id="CHEBI:29108"/>
    </ligand>
</feature>
<feature type="disulfide bond" evidence="2">
    <location>
        <begin position="25"/>
        <end position="36"/>
    </location>
</feature>
<feature type="disulfide bond" evidence="2">
    <location>
        <begin position="53"/>
        <end position="150"/>
    </location>
</feature>
<feature type="disulfide bond" description="Interchain (with C-98 in subunit B)" evidence="2">
    <location>
        <position position="102"/>
    </location>
</feature>
<feature type="disulfide bond" evidence="2">
    <location>
        <begin position="125"/>
        <end position="142"/>
    </location>
</feature>
<evidence type="ECO:0000250" key="1"/>
<evidence type="ECO:0000255" key="2">
    <source>
        <dbReference type="PROSITE-ProRule" id="PRU00040"/>
    </source>
</evidence>
<evidence type="ECO:0000305" key="3"/>
<reference key="1">
    <citation type="submission" date="2001-03" db="EMBL/GenBank/DDBJ databases">
        <title>Cloning and characterization of C-type lectins from Trimeresurus stejnegeri venom.</title>
        <authorList>
            <person name="Lee W.-H."/>
            <person name="Liu H."/>
            <person name="Zhang Y."/>
        </authorList>
    </citation>
    <scope>NUCLEOTIDE SEQUENCE [MRNA]</scope>
    <source>
        <tissue>Venom gland</tissue>
    </source>
</reference>
<organism>
    <name type="scientific">Trimeresurus stejnegeri</name>
    <name type="common">Chinese green tree viper</name>
    <name type="synonym">Viridovipera stejnegeri</name>
    <dbReference type="NCBI Taxonomy" id="39682"/>
    <lineage>
        <taxon>Eukaryota</taxon>
        <taxon>Metazoa</taxon>
        <taxon>Chordata</taxon>
        <taxon>Craniata</taxon>
        <taxon>Vertebrata</taxon>
        <taxon>Euteleostomi</taxon>
        <taxon>Lepidosauria</taxon>
        <taxon>Squamata</taxon>
        <taxon>Bifurcata</taxon>
        <taxon>Unidentata</taxon>
        <taxon>Episquamata</taxon>
        <taxon>Toxicofera</taxon>
        <taxon>Serpentes</taxon>
        <taxon>Colubroidea</taxon>
        <taxon>Viperidae</taxon>
        <taxon>Crotalinae</taxon>
        <taxon>Trimeresurus</taxon>
    </lineage>
</organism>